<name>E1B55_ADE02</name>
<organismHost>
    <name type="scientific">Homo sapiens</name>
    <name type="common">Human</name>
    <dbReference type="NCBI Taxonomy" id="9606"/>
</organismHost>
<comment type="function">
    <text evidence="1">Plays a major role to prevent cellular inhibition of viral genome replication. Assembles an SCF-like E3 ubiquitin ligase complex based on the cellular proteins ELOB, ELOC, CUL5 and RBX1, in cooperation with viral E4orf6. This viral RING-type ligase ubiquitinates cellular substrates and targets them to proteasomal degradation: TP53/p53, LIG4, MRE11-RAD50-NBS1 (MRN) complex, ITGA3, DAXX and BLM. E1B-55K probably acts as the substrate-specific adapter of the SCF-like E3 ubiquitin ligase complex. Degradation of host TP53/p53 activity is essential for preventing E1A-induced TP53 accumulation that would otherwise lead to cell apoptosis and growth arrest. E1B-55K also inactivates TP53 transcription-factor activity by binding its transactivation domain. E1B-55K also functions as a SUMO1 E3 ligase for TP53 which causes the latter to be sequestered in promyelocytic leukemia (PML) nuclear bodies thereby contributing to maximal inhibition of TP53 function.</text>
</comment>
<comment type="subunit">
    <text evidence="1 3 4">Interacts with host PML-4 and PML-5; this interaction promotes efficient subnuclear targeting of E1B-55K to PML nuclear bodies (By similarity). Interacts with E4-ORF3 protein (PubMed:10211970). Interacts with E4-ORF6 protein (PubMed:11070042).</text>
</comment>
<comment type="interaction">
    <interactant intactId="EBI-1561155">
        <id>P03244</id>
    </interactant>
    <interactant intactId="EBI-77321">
        <id>Q9UER7</id>
        <label>DAXX</label>
    </interactant>
    <organismsDiffer>true</organismsDiffer>
    <experiments>4</experiments>
</comment>
<comment type="subcellular location">
    <subcellularLocation>
        <location evidence="3">Host nucleus</location>
    </subcellularLocation>
    <subcellularLocation>
        <location evidence="3">Host cytoplasm</location>
    </subcellularLocation>
    <text evidence="1">Colocalizes with host TP53 to host PML nuclear bodies. PML localization of E1B-55K is necessary for E1B-55K-dependent SUMOylation of TP53.</text>
</comment>
<comment type="alternative products">
    <event type="alternative splicing"/>
    <isoform>
        <id>P03244-1</id>
        <name>E1B-495R</name>
        <name>E1B-55K</name>
        <sequence type="displayed"/>
    </isoform>
    <isoform>
        <id>P03244-2</id>
        <name>E1B-155R</name>
        <name>E1B-18K</name>
        <sequence type="not described"/>
    </isoform>
    <isoform>
        <id>P03244-3</id>
        <name>E1B-92R</name>
        <name>E1B-16K</name>
        <sequence type="not described"/>
    </isoform>
    <isoform>
        <id>P03244-4</id>
        <name>E1B-82R</name>
        <name>E1B-15K</name>
        <sequence type="not described"/>
    </isoform>
    <isoform>
        <id>P03247-1</id>
        <name>E1B-175R</name>
        <name>E1B-19K</name>
        <sequence type="external"/>
    </isoform>
    <text>At least five different polypeptides are generated by alternative splicing of a common mRNA precursor.</text>
</comment>
<comment type="domain">
    <text evidence="1">Contains a PML interaction motif that allows the subnuclear PML localization.</text>
</comment>
<comment type="similarity">
    <text evidence="5">Belongs to the adenoviridae E1B 55 kDa protein family.</text>
</comment>
<protein>
    <recommendedName>
        <fullName>E1B 55 kDa protein</fullName>
        <shortName>E1B-55K</shortName>
    </recommendedName>
    <alternativeName>
        <fullName>E1B protein, large T-antigen</fullName>
    </alternativeName>
    <alternativeName>
        <fullName>E1B-495R</fullName>
    </alternativeName>
</protein>
<organism>
    <name type="scientific">Human adenovirus C serotype 2</name>
    <name type="common">HAdV-2</name>
    <name type="synonym">Human adenovirus 2</name>
    <dbReference type="NCBI Taxonomy" id="10515"/>
    <lineage>
        <taxon>Viruses</taxon>
        <taxon>Varidnaviria</taxon>
        <taxon>Bamfordvirae</taxon>
        <taxon>Preplasmiviricota</taxon>
        <taxon>Tectiliviricetes</taxon>
        <taxon>Rowavirales</taxon>
        <taxon>Adenoviridae</taxon>
        <taxon>Mastadenovirus</taxon>
        <taxon>Human mastadenovirus C</taxon>
    </lineage>
</organism>
<gene>
    <name type="primary">E1B</name>
</gene>
<keyword id="KW-0025">Alternative splicing</keyword>
<keyword id="KW-0244">Early protein</keyword>
<keyword id="KW-1035">Host cytoplasm</keyword>
<keyword id="KW-1048">Host nucleus</keyword>
<keyword id="KW-0945">Host-virus interaction</keyword>
<keyword id="KW-1090">Inhibition of host innate immune response by virus</keyword>
<keyword id="KW-1114">Inhibition of host interferon signaling pathway by virus</keyword>
<keyword id="KW-1102">Inhibition of host PKR by virus</keyword>
<keyword id="KW-0922">Interferon antiviral system evasion</keyword>
<keyword id="KW-1119">Modulation of host cell apoptosis by virus</keyword>
<keyword id="KW-0597">Phosphoprotein</keyword>
<keyword id="KW-1185">Reference proteome</keyword>
<keyword id="KW-0899">Viral immunoevasion</keyword>
<evidence type="ECO:0000250" key="1">
    <source>
        <dbReference type="UniProtKB" id="P03243"/>
    </source>
</evidence>
<evidence type="ECO:0000256" key="2">
    <source>
        <dbReference type="SAM" id="MobiDB-lite"/>
    </source>
</evidence>
<evidence type="ECO:0000269" key="3">
    <source>
    </source>
</evidence>
<evidence type="ECO:0000269" key="4">
    <source>
    </source>
</evidence>
<evidence type="ECO:0000305" key="5"/>
<proteinExistence type="evidence at protein level"/>
<sequence>MERRNPSERGVPAGFSGHASVESGGETQESPATVVFRPPGNNTDGGATAGGSQAAAAAGAEPMEPESRPGPSGMNVVQVAELFPELRRILTINEDGQGLKGVKRERGASEATEEARNLTFSLMTRHRPECVTFQQIKDNCANELDLLAQKYSIEQLTTYWLQPGDDFEEAIRVYAKVALRPDCKYKISKLVNIRNCCYISGNGAEVEIDTEDRVAFRCSMINMWPGVLGMDGVVIMNVRFTGPNFSGTVFLANTNLILHGVSFYGFNNTCVEAWTDVRVRGCAFYCCWKGVVCRPKSRASIKKCLFERCTLGILSEGNSRVRHNVASDCGCFMLVKSVAVIKHNMVCGNCEDRASQMLTCSDGNCHLLKTIHVASHSRKAWPVFEHNILTRCSLHLGNRRGVFLPYQCNLSHTKILLEPESMSKVNLNGVFDMTMKIWKVLRYDETRTRCRPCECGGKHIRNQPVMLDVTEELRPDHLVLACTRAEFGSSDEDTD</sequence>
<accession>P03244</accession>
<accession>Q67789</accession>
<accession>Q67790</accession>
<feature type="chain" id="PRO_0000221724" description="E1B 55 kDa protein">
    <location>
        <begin position="1"/>
        <end position="495"/>
    </location>
</feature>
<feature type="region of interest" description="Disordered" evidence="2">
    <location>
        <begin position="1"/>
        <end position="74"/>
    </location>
</feature>
<feature type="compositionally biased region" description="Low complexity" evidence="2">
    <location>
        <begin position="40"/>
        <end position="60"/>
    </location>
</feature>
<feature type="modified residue" description="Phosphoserine" evidence="1">
    <location>
        <position position="489"/>
    </location>
</feature>
<feature type="modified residue" description="Phosphoserine" evidence="1">
    <location>
        <position position="490"/>
    </location>
</feature>
<feature type="modified residue" description="Phosphothreonine" evidence="1">
    <location>
        <position position="494"/>
    </location>
</feature>
<dbReference type="EMBL" id="J01917">
    <property type="protein sequence ID" value="AAA92201.1"/>
    <property type="molecule type" value="Genomic_DNA"/>
</dbReference>
<dbReference type="EMBL" id="J01917">
    <property type="protein sequence ID" value="AAA92202.1"/>
    <property type="molecule type" value="Genomic_DNA"/>
</dbReference>
<dbReference type="EMBL" id="J01917">
    <property type="protein sequence ID" value="AAA92203.1"/>
    <property type="molecule type" value="Genomic_DNA"/>
</dbReference>
<dbReference type="PIR" id="B03809">
    <property type="entry name" value="Q1AD52"/>
</dbReference>
<dbReference type="RefSeq" id="AP_000163.1">
    <molecule id="P03244-1"/>
    <property type="nucleotide sequence ID" value="AC_000007.1"/>
</dbReference>
<dbReference type="RefSeq" id="NP_040511.1">
    <property type="nucleotide sequence ID" value="NC_001405.1"/>
</dbReference>
<dbReference type="SMR" id="P03244"/>
<dbReference type="IntAct" id="P03244">
    <property type="interactions" value="3"/>
</dbReference>
<dbReference type="MINT" id="P03244"/>
<dbReference type="GeneID" id="2652981"/>
<dbReference type="KEGG" id="vg:2652981"/>
<dbReference type="Proteomes" id="UP000008167">
    <property type="component" value="Segment"/>
</dbReference>
<dbReference type="GO" id="GO:0030430">
    <property type="term" value="C:host cell cytoplasm"/>
    <property type="evidence" value="ECO:0000250"/>
    <property type="project" value="UniProtKB"/>
</dbReference>
<dbReference type="GO" id="GO:0042025">
    <property type="term" value="C:host cell nucleus"/>
    <property type="evidence" value="ECO:0000314"/>
    <property type="project" value="UniProtKB"/>
</dbReference>
<dbReference type="GO" id="GO:0030291">
    <property type="term" value="F:protein serine/threonine kinase inhibitor activity"/>
    <property type="evidence" value="ECO:0007669"/>
    <property type="project" value="UniProtKB-KW"/>
</dbReference>
<dbReference type="GO" id="GO:1990756">
    <property type="term" value="F:ubiquitin-like ligase-substrate adaptor activity"/>
    <property type="evidence" value="ECO:0000250"/>
    <property type="project" value="UniProtKB"/>
</dbReference>
<dbReference type="GO" id="GO:0052150">
    <property type="term" value="P:symbiont-mediated perturbation of host apoptosis"/>
    <property type="evidence" value="ECO:0007669"/>
    <property type="project" value="UniProtKB-KW"/>
</dbReference>
<dbReference type="GO" id="GO:0039648">
    <property type="term" value="P:symbiont-mediated perturbation of host ubiquitin-like protein modification"/>
    <property type="evidence" value="ECO:0000250"/>
    <property type="project" value="UniProtKB"/>
</dbReference>
<dbReference type="GO" id="GO:0052170">
    <property type="term" value="P:symbiont-mediated suppression of host innate immune response"/>
    <property type="evidence" value="ECO:0007669"/>
    <property type="project" value="UniProtKB-KW"/>
</dbReference>
<dbReference type="GO" id="GO:0039580">
    <property type="term" value="P:symbiont-mediated suppression of host PKR/eIFalpha signaling"/>
    <property type="evidence" value="ECO:0007669"/>
    <property type="project" value="UniProtKB-KW"/>
</dbReference>
<dbReference type="GO" id="GO:0039502">
    <property type="term" value="P:symbiont-mediated suppression of host type I interferon-mediated signaling pathway"/>
    <property type="evidence" value="ECO:0007669"/>
    <property type="project" value="UniProtKB-KW"/>
</dbReference>
<dbReference type="Gene3D" id="2.160.20.10">
    <property type="entry name" value="Single-stranded right-handed beta-helix, Pectin lyase-like"/>
    <property type="match status" value="1"/>
</dbReference>
<dbReference type="InterPro" id="IPR006717">
    <property type="entry name" value="Adeno_E1B_55K_N"/>
</dbReference>
<dbReference type="InterPro" id="IPR002612">
    <property type="entry name" value="Adeno_E1B_55kDa"/>
</dbReference>
<dbReference type="InterPro" id="IPR012334">
    <property type="entry name" value="Pectin_lyas_fold"/>
</dbReference>
<dbReference type="InterPro" id="IPR011050">
    <property type="entry name" value="Pectin_lyase_fold/virulence"/>
</dbReference>
<dbReference type="Pfam" id="PF01696">
    <property type="entry name" value="Adeno_E1B_55K"/>
    <property type="match status" value="1"/>
</dbReference>
<dbReference type="Pfam" id="PF04623">
    <property type="entry name" value="Adeno_E1B_55K_N"/>
    <property type="match status" value="1"/>
</dbReference>
<dbReference type="SUPFAM" id="SSF51126">
    <property type="entry name" value="Pectin lyase-like"/>
    <property type="match status" value="1"/>
</dbReference>
<reference key="1">
    <citation type="journal article" date="1982" name="J. Biol. Chem.">
        <title>Nucleotide sequences from the adenovirus-2 genome.</title>
        <authorList>
            <person name="Gingeras T.R."/>
            <person name="Sciaky D."/>
            <person name="Gelinas R.E."/>
            <person name="Bing-Dong J."/>
            <person name="Yen C.E."/>
            <person name="Kelly M.M."/>
            <person name="Bullock P.A."/>
            <person name="Parsons B.L."/>
            <person name="O'Neill K.E."/>
            <person name="Roberts R.J."/>
        </authorList>
    </citation>
    <scope>NUCLEOTIDE SEQUENCE [GENOMIC DNA]</scope>
</reference>
<reference key="2">
    <citation type="journal article" date="1999" name="J. Gen. Virol.">
        <title>The adenovirus type 5 E1b 55K and E4 Orf3 proteins associate in infected cells and affect ND10 components.</title>
        <authorList>
            <person name="Leppard K.N."/>
            <person name="Everett R.D."/>
        </authorList>
    </citation>
    <scope>SUBCELLULAR LOCATION</scope>
    <scope>INTERACTION WITH E4-ORF3 PROTEIN</scope>
</reference>
<reference key="3">
    <citation type="journal article" date="2000" name="J. Virol.">
        <title>A functional complex of adenovirus proteins E1B-55kDa and E4orf6 is necessary to modulate the expression level of p53 but not its transcriptional activity.</title>
        <authorList>
            <person name="Cathomen T."/>
            <person name="Weitzman M.D."/>
        </authorList>
    </citation>
    <scope>INTERACTION WITH E4-ORF6</scope>
</reference>